<keyword id="KW-0539">Nucleus</keyword>
<keyword id="KW-0804">Transcription</keyword>
<keyword id="KW-0805">Transcription regulation</keyword>
<dbReference type="EMBL" id="AJ312341">
    <property type="protein sequence ID" value="CAC44187.1"/>
    <property type="molecule type" value="mRNA"/>
</dbReference>
<dbReference type="RefSeq" id="NP_001117838.1">
    <property type="nucleotide sequence ID" value="NM_001124366.1"/>
</dbReference>
<dbReference type="SMR" id="Q90YG6"/>
<dbReference type="Ensembl" id="ENSOMYT00000072293.2">
    <property type="protein sequence ID" value="ENSOMYP00000066370.2"/>
    <property type="gene ID" value="ENSOMYG00000030677.2"/>
</dbReference>
<dbReference type="Ensembl" id="ENSOMYT00000123691.1">
    <property type="protein sequence ID" value="ENSOMYP00000134705.1"/>
    <property type="gene ID" value="ENSOMYG00000065240.1"/>
</dbReference>
<dbReference type="GeneID" id="100136048"/>
<dbReference type="KEGG" id="omy:100136048"/>
<dbReference type="CTD" id="2958"/>
<dbReference type="GeneTree" id="ENSGT00390000014572"/>
<dbReference type="OrthoDB" id="586585at2759"/>
<dbReference type="Proteomes" id="UP000694395">
    <property type="component" value="Chromosome 26"/>
</dbReference>
<dbReference type="Proteomes" id="UP000694395">
    <property type="component" value="Chromosome 6"/>
</dbReference>
<dbReference type="GO" id="GO:0005672">
    <property type="term" value="C:transcription factor TFIIA complex"/>
    <property type="evidence" value="ECO:0007669"/>
    <property type="project" value="InterPro"/>
</dbReference>
<dbReference type="GO" id="GO:0006367">
    <property type="term" value="P:transcription initiation at RNA polymerase II promoter"/>
    <property type="evidence" value="ECO:0007669"/>
    <property type="project" value="InterPro"/>
</dbReference>
<dbReference type="CDD" id="cd10014">
    <property type="entry name" value="TFIIA_gamma_C"/>
    <property type="match status" value="1"/>
</dbReference>
<dbReference type="CDD" id="cd10145">
    <property type="entry name" value="TFIIA_gamma_N"/>
    <property type="match status" value="1"/>
</dbReference>
<dbReference type="FunFam" id="1.10.287.190:FF:000001">
    <property type="entry name" value="Transcription initiation factor IIA subunit 2"/>
    <property type="match status" value="1"/>
</dbReference>
<dbReference type="FunFam" id="2.30.18.10:FF:000001">
    <property type="entry name" value="Transcription initiation factor IIA subunit 2"/>
    <property type="match status" value="1"/>
</dbReference>
<dbReference type="Gene3D" id="2.30.18.10">
    <property type="entry name" value="Transcription factor IIA (TFIIA), beta-barrel domain"/>
    <property type="match status" value="1"/>
</dbReference>
<dbReference type="Gene3D" id="1.10.287.190">
    <property type="entry name" value="Transcription factor IIA gamma subunit, alpha-helical domain"/>
    <property type="match status" value="1"/>
</dbReference>
<dbReference type="InterPro" id="IPR009083">
    <property type="entry name" value="TFIIA_a-hlx"/>
</dbReference>
<dbReference type="InterPro" id="IPR009088">
    <property type="entry name" value="TFIIA_b-brl"/>
</dbReference>
<dbReference type="InterPro" id="IPR003194">
    <property type="entry name" value="TFIIA_gsu"/>
</dbReference>
<dbReference type="InterPro" id="IPR015871">
    <property type="entry name" value="TFIIA_gsu_C"/>
</dbReference>
<dbReference type="InterPro" id="IPR015872">
    <property type="entry name" value="TFIIA_gsu_N"/>
</dbReference>
<dbReference type="PANTHER" id="PTHR10966">
    <property type="entry name" value="TRANSCRIPTION INITIATION FACTOR IIA SUBUNIT 2"/>
    <property type="match status" value="1"/>
</dbReference>
<dbReference type="Pfam" id="PF02751">
    <property type="entry name" value="TFIIA_gamma_C"/>
    <property type="match status" value="1"/>
</dbReference>
<dbReference type="Pfam" id="PF02268">
    <property type="entry name" value="TFIIA_gamma_N"/>
    <property type="match status" value="1"/>
</dbReference>
<dbReference type="PIRSF" id="PIRSF009415">
    <property type="entry name" value="Hum_TFIIA_gamma"/>
    <property type="match status" value="1"/>
</dbReference>
<dbReference type="SUPFAM" id="SSF47396">
    <property type="entry name" value="Transcription factor IIA (TFIIA), alpha-helical domain"/>
    <property type="match status" value="1"/>
</dbReference>
<dbReference type="SUPFAM" id="SSF50784">
    <property type="entry name" value="Transcription factor IIA (TFIIA), beta-barrel domain"/>
    <property type="match status" value="1"/>
</dbReference>
<evidence type="ECO:0000250" key="1"/>
<evidence type="ECO:0000305" key="2"/>
<organism>
    <name type="scientific">Oncorhynchus mykiss</name>
    <name type="common">Rainbow trout</name>
    <name type="synonym">Salmo gairdneri</name>
    <dbReference type="NCBI Taxonomy" id="8022"/>
    <lineage>
        <taxon>Eukaryota</taxon>
        <taxon>Metazoa</taxon>
        <taxon>Chordata</taxon>
        <taxon>Craniata</taxon>
        <taxon>Vertebrata</taxon>
        <taxon>Euteleostomi</taxon>
        <taxon>Actinopterygii</taxon>
        <taxon>Neopterygii</taxon>
        <taxon>Teleostei</taxon>
        <taxon>Protacanthopterygii</taxon>
        <taxon>Salmoniformes</taxon>
        <taxon>Salmonidae</taxon>
        <taxon>Salmoninae</taxon>
        <taxon>Oncorhynchus</taxon>
    </lineage>
</organism>
<gene>
    <name type="primary">gtf2a2</name>
</gene>
<protein>
    <recommendedName>
        <fullName>Transcription initiation factor IIA subunit 2</fullName>
    </recommendedName>
    <alternativeName>
        <fullName>General transcription factor IIA subunit 2</fullName>
    </alternativeName>
    <alternativeName>
        <fullName>Transcription initiation factor IIA gamma chain</fullName>
        <shortName>TFIIA-gamma</shortName>
    </alternativeName>
</protein>
<sequence length="108" mass="12284">MAYQLYRNTTLGNSLQESLDELIQTQQITPQLALQVLLQFDKAINTALANRVRNRVNFKGSLNTYRFCDNVWTFVLNDVEFREVTDLVKVDKVKIVACDGKNTGNAAE</sequence>
<feature type="chain" id="PRO_0000194045" description="Transcription initiation factor IIA subunit 2">
    <location>
        <begin position="1"/>
        <end position="108"/>
    </location>
</feature>
<reference key="1">
    <citation type="submission" date="2001-06" db="EMBL/GenBank/DDBJ databases">
        <title>Screening a rainbow trout (Oncorhynchus mykiss) cDNA library.</title>
        <authorList>
            <person name="Pleguezuelos O."/>
            <person name="Secombes C.J."/>
        </authorList>
    </citation>
    <scope>NUCLEOTIDE SEQUENCE [MRNA]</scope>
</reference>
<name>T2AG_ONCMY</name>
<proteinExistence type="inferred from homology"/>
<comment type="function">
    <text evidence="1">TFIIA is a component of the transcription machinery of RNA polymerase II and plays an important role in transcriptional activation. TFIIA in a complex with TBP mediates transcriptional activity (By similarity).</text>
</comment>
<comment type="subunit">
    <text evidence="1">TFIIA is a heterodimer of the large unprocessed subunit 1 and a small subunit gamma. It was originally believed to be a heterotrimer of an alpha, a beta and a gamma subunit. Interacts with NCOA6 general coactivator. TFIIA forms a complex with TBP (By similarity).</text>
</comment>
<comment type="subcellular location">
    <subcellularLocation>
        <location>Nucleus</location>
    </subcellularLocation>
</comment>
<comment type="similarity">
    <text evidence="2">Belongs to the TFIIA subunit 2 family.</text>
</comment>
<accession>Q90YG6</accession>